<dbReference type="EC" id="1.1.1.36"/>
<dbReference type="EMBL" id="J04987">
    <property type="protein sequence ID" value="AAA21973.1"/>
    <property type="molecule type" value="Genomic_DNA"/>
</dbReference>
<dbReference type="EMBL" id="AM260479">
    <property type="protein sequence ID" value="CAJ92574.1"/>
    <property type="molecule type" value="Genomic_DNA"/>
</dbReference>
<dbReference type="PIR" id="B34340">
    <property type="entry name" value="RDALAE"/>
</dbReference>
<dbReference type="RefSeq" id="WP_010810131.1">
    <property type="nucleotide sequence ID" value="NZ_CP039287.1"/>
</dbReference>
<dbReference type="PDB" id="3VZP">
    <property type="method" value="X-ray"/>
    <property type="resolution" value="1.79 A"/>
    <property type="chains" value="A/B/C/D=2-246"/>
</dbReference>
<dbReference type="PDB" id="3VZQ">
    <property type="method" value="X-ray"/>
    <property type="resolution" value="2.00 A"/>
    <property type="chains" value="A/B=2-246"/>
</dbReference>
<dbReference type="PDB" id="3VZR">
    <property type="method" value="X-ray"/>
    <property type="resolution" value="2.90 A"/>
    <property type="chains" value="A/B=2-246"/>
</dbReference>
<dbReference type="PDB" id="3VZS">
    <property type="method" value="X-ray"/>
    <property type="resolution" value="2.14 A"/>
    <property type="chains" value="A/B/C/D=2-246"/>
</dbReference>
<dbReference type="PDB" id="4N5L">
    <property type="method" value="X-ray"/>
    <property type="resolution" value="1.65 A"/>
    <property type="chains" value="A/B=1-246"/>
</dbReference>
<dbReference type="PDB" id="4N5M">
    <property type="method" value="X-ray"/>
    <property type="resolution" value="1.34 A"/>
    <property type="chains" value="A/B=1-246"/>
</dbReference>
<dbReference type="PDB" id="4N5N">
    <property type="method" value="X-ray"/>
    <property type="resolution" value="1.90 A"/>
    <property type="chains" value="A/B=1-246"/>
</dbReference>
<dbReference type="PDBsum" id="3VZP"/>
<dbReference type="PDBsum" id="3VZQ"/>
<dbReference type="PDBsum" id="3VZR"/>
<dbReference type="PDBsum" id="3VZS"/>
<dbReference type="PDBsum" id="4N5L"/>
<dbReference type="PDBsum" id="4N5M"/>
<dbReference type="PDBsum" id="4N5N"/>
<dbReference type="SMR" id="P14697"/>
<dbReference type="STRING" id="381666.H16_A1439"/>
<dbReference type="KEGG" id="reh:H16_A1439"/>
<dbReference type="eggNOG" id="COG1028">
    <property type="taxonomic scope" value="Bacteria"/>
</dbReference>
<dbReference type="HOGENOM" id="CLU_010194_1_3_4"/>
<dbReference type="OrthoDB" id="9802564at2"/>
<dbReference type="BRENDA" id="1.1.1.100">
    <property type="organism ID" value="231"/>
</dbReference>
<dbReference type="BRENDA" id="1.1.1.36">
    <property type="organism ID" value="231"/>
</dbReference>
<dbReference type="UniPathway" id="UPA00917"/>
<dbReference type="EvolutionaryTrace" id="P14697"/>
<dbReference type="Proteomes" id="UP000008210">
    <property type="component" value="Chromosome 1"/>
</dbReference>
<dbReference type="GO" id="GO:0005737">
    <property type="term" value="C:cytoplasm"/>
    <property type="evidence" value="ECO:0007669"/>
    <property type="project" value="UniProtKB-SubCell"/>
</dbReference>
<dbReference type="GO" id="GO:0018454">
    <property type="term" value="F:acetoacetyl-CoA reductase activity"/>
    <property type="evidence" value="ECO:0007669"/>
    <property type="project" value="UniProtKB-EC"/>
</dbReference>
<dbReference type="GO" id="GO:0006629">
    <property type="term" value="P:lipid metabolic process"/>
    <property type="evidence" value="ECO:0007669"/>
    <property type="project" value="UniProtKB-ARBA"/>
</dbReference>
<dbReference type="GO" id="GO:0032787">
    <property type="term" value="P:monocarboxylic acid metabolic process"/>
    <property type="evidence" value="ECO:0007669"/>
    <property type="project" value="UniProtKB-ARBA"/>
</dbReference>
<dbReference type="GO" id="GO:0042619">
    <property type="term" value="P:poly-hydroxybutyrate biosynthetic process"/>
    <property type="evidence" value="ECO:0007669"/>
    <property type="project" value="UniProtKB-KW"/>
</dbReference>
<dbReference type="CDD" id="cd05333">
    <property type="entry name" value="BKR_SDR_c"/>
    <property type="match status" value="1"/>
</dbReference>
<dbReference type="FunFam" id="3.40.50.720:FF:000173">
    <property type="entry name" value="3-oxoacyl-[acyl-carrier protein] reductase"/>
    <property type="match status" value="1"/>
</dbReference>
<dbReference type="Gene3D" id="3.40.50.720">
    <property type="entry name" value="NAD(P)-binding Rossmann-like Domain"/>
    <property type="match status" value="1"/>
</dbReference>
<dbReference type="InterPro" id="IPR011283">
    <property type="entry name" value="Acetoacetyl-CoA_reductase"/>
</dbReference>
<dbReference type="InterPro" id="IPR036291">
    <property type="entry name" value="NAD(P)-bd_dom_sf"/>
</dbReference>
<dbReference type="InterPro" id="IPR020904">
    <property type="entry name" value="Sc_DH/Rdtase_CS"/>
</dbReference>
<dbReference type="InterPro" id="IPR050259">
    <property type="entry name" value="SDR"/>
</dbReference>
<dbReference type="InterPro" id="IPR002347">
    <property type="entry name" value="SDR_fam"/>
</dbReference>
<dbReference type="NCBIfam" id="TIGR01829">
    <property type="entry name" value="AcAcCoA_reduct"/>
    <property type="match status" value="1"/>
</dbReference>
<dbReference type="NCBIfam" id="NF009464">
    <property type="entry name" value="PRK12824.1"/>
    <property type="match status" value="1"/>
</dbReference>
<dbReference type="NCBIfam" id="NF009466">
    <property type="entry name" value="PRK12826.1-2"/>
    <property type="match status" value="1"/>
</dbReference>
<dbReference type="NCBIfam" id="NF009548">
    <property type="entry name" value="PRK12938.1"/>
    <property type="match status" value="1"/>
</dbReference>
<dbReference type="PANTHER" id="PTHR42879">
    <property type="entry name" value="3-OXOACYL-(ACYL-CARRIER-PROTEIN) REDUCTASE"/>
    <property type="match status" value="1"/>
</dbReference>
<dbReference type="PANTHER" id="PTHR42879:SF2">
    <property type="entry name" value="3-OXOACYL-[ACYL-CARRIER-PROTEIN] REDUCTASE FABG"/>
    <property type="match status" value="1"/>
</dbReference>
<dbReference type="Pfam" id="PF00106">
    <property type="entry name" value="adh_short"/>
    <property type="match status" value="1"/>
</dbReference>
<dbReference type="PRINTS" id="PR00081">
    <property type="entry name" value="GDHRDH"/>
</dbReference>
<dbReference type="PRINTS" id="PR00080">
    <property type="entry name" value="SDRFAMILY"/>
</dbReference>
<dbReference type="SMART" id="SM00822">
    <property type="entry name" value="PKS_KR"/>
    <property type="match status" value="1"/>
</dbReference>
<dbReference type="SUPFAM" id="SSF51735">
    <property type="entry name" value="NAD(P)-binding Rossmann-fold domains"/>
    <property type="match status" value="1"/>
</dbReference>
<dbReference type="PROSITE" id="PS00061">
    <property type="entry name" value="ADH_SHORT"/>
    <property type="match status" value="1"/>
</dbReference>
<organism>
    <name type="scientific">Cupriavidus necator (strain ATCC 17699 / DSM 428 / KCTC 22496 / NCIMB 10442 / H16 / Stanier 337)</name>
    <name type="common">Ralstonia eutropha</name>
    <dbReference type="NCBI Taxonomy" id="381666"/>
    <lineage>
        <taxon>Bacteria</taxon>
        <taxon>Pseudomonadati</taxon>
        <taxon>Pseudomonadota</taxon>
        <taxon>Betaproteobacteria</taxon>
        <taxon>Burkholderiales</taxon>
        <taxon>Burkholderiaceae</taxon>
        <taxon>Cupriavidus</taxon>
    </lineage>
</organism>
<feature type="chain" id="PRO_0000054748" description="Acetoacetyl-CoA reductase">
    <location>
        <begin position="1"/>
        <end position="246"/>
    </location>
</feature>
<feature type="active site" description="Proton acceptor" evidence="1">
    <location>
        <position position="153"/>
    </location>
</feature>
<feature type="binding site" evidence="2">
    <location>
        <begin position="13"/>
        <end position="15"/>
    </location>
    <ligand>
        <name>NADP(+)</name>
        <dbReference type="ChEBI" id="CHEBI:58349"/>
    </ligand>
</feature>
<feature type="binding site" evidence="2">
    <location>
        <position position="35"/>
    </location>
    <ligand>
        <name>NADP(+)</name>
        <dbReference type="ChEBI" id="CHEBI:58349"/>
    </ligand>
</feature>
<feature type="binding site" evidence="2">
    <location>
        <position position="40"/>
    </location>
    <ligand>
        <name>NADP(+)</name>
        <dbReference type="ChEBI" id="CHEBI:58349"/>
    </ligand>
</feature>
<feature type="binding site" evidence="2">
    <location>
        <begin position="60"/>
        <end position="62"/>
    </location>
    <ligand>
        <name>NADP(+)</name>
        <dbReference type="ChEBI" id="CHEBI:58349"/>
    </ligand>
</feature>
<feature type="binding site" evidence="2">
    <location>
        <begin position="88"/>
        <end position="92"/>
    </location>
    <ligand>
        <name>NADP(+)</name>
        <dbReference type="ChEBI" id="CHEBI:58349"/>
    </ligand>
</feature>
<feature type="binding site">
    <location>
        <position position="94"/>
    </location>
    <ligand>
        <name>substrate</name>
    </ligand>
</feature>
<feature type="binding site">
    <location>
        <begin position="147"/>
        <end position="150"/>
    </location>
    <ligand>
        <name>substrate</name>
    </ligand>
</feature>
<feature type="binding site" evidence="2">
    <location>
        <begin position="183"/>
        <end position="186"/>
    </location>
    <ligand>
        <name>NADP(+)</name>
        <dbReference type="ChEBI" id="CHEBI:58349"/>
    </ligand>
</feature>
<feature type="binding site">
    <location>
        <begin position="184"/>
        <end position="185"/>
    </location>
    <ligand>
        <name>substrate</name>
    </ligand>
</feature>
<feature type="binding site">
    <location>
        <position position="195"/>
    </location>
    <ligand>
        <name>substrate</name>
    </ligand>
</feature>
<feature type="mutagenesis site" description="2.4-fold increase in activity. 2-fold decrease in affinity for NADPH and 2.8-fold decrease in affinity for acetoacetyl-CoA." evidence="2 3">
    <original>Q</original>
    <variation>L</variation>
    <location>
        <position position="47"/>
    </location>
</feature>
<feature type="mutagenesis site" description="About 6% of wild-type activity." evidence="3">
    <original>D</original>
    <variation>A</variation>
    <location>
        <position position="94"/>
    </location>
</feature>
<feature type="mutagenesis site" description="Nearly loss of activity." evidence="3">
    <original>K</original>
    <variation>A</variation>
    <location>
        <position position="99"/>
    </location>
</feature>
<feature type="mutagenesis site" description="About 30% of wild-type activity." evidence="3">
    <original>Q</original>
    <variation>A</variation>
    <location>
        <position position="147"/>
    </location>
</feature>
<feature type="mutagenesis site" description="About 30% of wild-type activity." evidence="3">
    <original>F</original>
    <variation>A</variation>
    <location>
        <position position="148"/>
    </location>
</feature>
<feature type="mutagenesis site" description="About 20% of wild-type activity." evidence="3">
    <original>Q</original>
    <variation>A</variation>
    <location>
        <position position="150"/>
    </location>
</feature>
<feature type="mutagenesis site" description="3.5-fold increase in activity. 4-fold decrease in affinity for NADPH and 2.4-fold decrease in affinity for acetoacetyl-CoA." evidence="2 3">
    <original>T</original>
    <variation>S</variation>
    <location>
        <position position="173"/>
    </location>
</feature>
<feature type="mutagenesis site" description="Nearly loss of activity." evidence="3">
    <original>Y</original>
    <variation>A</variation>
    <location>
        <position position="185"/>
    </location>
</feature>
<feature type="mutagenesis site" description="Nearly loss of activity." evidence="3">
    <original>R</original>
    <variation>A</variation>
    <location>
        <position position="195"/>
    </location>
</feature>
<feature type="strand" evidence="10">
    <location>
        <begin position="5"/>
        <end position="8"/>
    </location>
</feature>
<feature type="turn" evidence="10">
    <location>
        <begin position="9"/>
        <end position="12"/>
    </location>
</feature>
<feature type="helix" evidence="10">
    <location>
        <begin position="14"/>
        <end position="25"/>
    </location>
</feature>
<feature type="strand" evidence="10">
    <location>
        <begin position="29"/>
        <end position="34"/>
    </location>
</feature>
<feature type="helix" evidence="10">
    <location>
        <begin position="41"/>
        <end position="50"/>
    </location>
</feature>
<feature type="strand" evidence="10">
    <location>
        <begin position="56"/>
        <end position="59"/>
    </location>
</feature>
<feature type="helix" evidence="10">
    <location>
        <begin position="65"/>
        <end position="78"/>
    </location>
</feature>
<feature type="strand" evidence="10">
    <location>
        <begin position="82"/>
        <end position="87"/>
    </location>
</feature>
<feature type="helix" evidence="10">
    <location>
        <begin position="97"/>
        <end position="99"/>
    </location>
</feature>
<feature type="helix" evidence="10">
    <location>
        <begin position="102"/>
        <end position="112"/>
    </location>
</feature>
<feature type="helix" evidence="10">
    <location>
        <begin position="114"/>
        <end position="130"/>
    </location>
</feature>
<feature type="strand" evidence="10">
    <location>
        <begin position="133"/>
        <end position="138"/>
    </location>
</feature>
<feature type="helix" evidence="10">
    <location>
        <begin position="141"/>
        <end position="145"/>
    </location>
</feature>
<feature type="helix" evidence="10">
    <location>
        <begin position="151"/>
        <end position="171"/>
    </location>
</feature>
<feature type="helix" evidence="10">
    <location>
        <begin position="172"/>
        <end position="174"/>
    </location>
</feature>
<feature type="strand" evidence="10">
    <location>
        <begin position="176"/>
        <end position="183"/>
    </location>
</feature>
<feature type="strand" evidence="10">
    <location>
        <begin position="185"/>
        <end position="188"/>
    </location>
</feature>
<feature type="helix" evidence="10">
    <location>
        <begin position="189"/>
        <end position="192"/>
    </location>
</feature>
<feature type="helix" evidence="10">
    <location>
        <begin position="196"/>
        <end position="204"/>
    </location>
</feature>
<feature type="helix" evidence="10">
    <location>
        <begin position="214"/>
        <end position="225"/>
    </location>
</feature>
<feature type="helix" evidence="9">
    <location>
        <begin position="227"/>
        <end position="229"/>
    </location>
</feature>
<feature type="strand" evidence="10">
    <location>
        <begin position="236"/>
        <end position="240"/>
    </location>
</feature>
<protein>
    <recommendedName>
        <fullName>Acetoacetyl-CoA reductase</fullName>
        <ecNumber>1.1.1.36</ecNumber>
    </recommendedName>
</protein>
<accession>P14697</accession>
<accession>Q0KBP7</accession>
<keyword id="KW-0002">3D-structure</keyword>
<keyword id="KW-0963">Cytoplasm</keyword>
<keyword id="KW-0521">NADP</keyword>
<keyword id="KW-0560">Oxidoreductase</keyword>
<keyword id="KW-0583">PHB biosynthesis</keyword>
<keyword id="KW-1185">Reference proteome</keyword>
<reference key="1">
    <citation type="journal article" date="1989" name="J. Biol. Chem.">
        <title>Poly-beta-hydroxybutyrate biosynthesis in Alcaligenes eutrophus H16. Characterization of the genes encoding beta-ketothiolase and acetoacetyl-CoA reductase.</title>
        <authorList>
            <person name="Peoples O.P."/>
            <person name="Sinskey A.J."/>
        </authorList>
    </citation>
    <scope>NUCLEOTIDE SEQUENCE [GENOMIC DNA]</scope>
    <scope>IDENTIFICATION</scope>
    <scope>FUNCTION</scope>
    <source>
        <strain>ATCC 17699 / DSM 428 / KCTC 22496 / NCIMB 10442 / H16 / Stanier 337</strain>
    </source>
</reference>
<reference key="2">
    <citation type="journal article" date="2006" name="Nat. Biotechnol.">
        <title>Genome sequence of the bioplastic-producing 'Knallgas' bacterium Ralstonia eutropha H16.</title>
        <authorList>
            <person name="Pohlmann A."/>
            <person name="Fricke W.F."/>
            <person name="Reinecke F."/>
            <person name="Kusian B."/>
            <person name="Liesegang H."/>
            <person name="Cramm R."/>
            <person name="Eitinger T."/>
            <person name="Ewering C."/>
            <person name="Poetter M."/>
            <person name="Schwartz E."/>
            <person name="Strittmatter A."/>
            <person name="Voss I."/>
            <person name="Gottschalk G."/>
            <person name="Steinbuechel A."/>
            <person name="Friedrich B."/>
            <person name="Bowien B."/>
        </authorList>
    </citation>
    <scope>NUCLEOTIDE SEQUENCE [LARGE SCALE GENOMIC DNA]</scope>
    <source>
        <strain>ATCC 17699 / DSM 428 / KCTC 22496 / NCIMB 10442 / H16 / Stanier 337</strain>
    </source>
</reference>
<reference key="3">
    <citation type="journal article" date="1989" name="J. Biol. Chem.">
        <title>Poly-beta-hydroxybutyrate (PHB) biosynthesis in Alcaligenes eutrophus H16. Identification and characterization of the PHB polymerase gene (phbC).</title>
        <authorList>
            <person name="Peoples O.P."/>
            <person name="Sinskey A.J."/>
        </authorList>
    </citation>
    <scope>FUNCTION IN PHB SYNTHESIS</scope>
    <scope>PATHWAY</scope>
    <source>
        <strain>ATCC 17699 / DSM 428 / KCTC 22496 / NCIMB 10442 / H16 / Stanier 337</strain>
    </source>
</reference>
<reference key="4">
    <citation type="journal article" date="1992" name="FEMS Microbiol. Rev.">
        <title>Molecular basis for biosynthesis and accumulation of polyhydroxyalkanoic acids in bacteria.</title>
        <authorList>
            <person name="Steinbuechel A."/>
            <person name="Hustede E."/>
            <person name="Liebergesell M."/>
            <person name="Pieper U."/>
            <person name="Timm A."/>
            <person name="Valentin H."/>
        </authorList>
    </citation>
    <scope>GENE NAME</scope>
</reference>
<reference key="5">
    <citation type="journal article" date="2013" name="Appl. Environ. Microbiol.">
        <title>Directed evolution and structural analysis of NADPH-dependent acetoacetyl coenzyme A (acetoacetyl-CoA) reductase from Ralstonia eutropha reveals two mutations responsible for enhanced kinetics.</title>
        <authorList>
            <person name="Matsumoto K."/>
            <person name="Tanaka Y."/>
            <person name="Watanabe T."/>
            <person name="Motohashi R."/>
            <person name="Ikeda K."/>
            <person name="Tobitani K."/>
            <person name="Yao M."/>
            <person name="Tanaka I."/>
            <person name="Taguchi S."/>
        </authorList>
    </citation>
    <scope>X-RAY CRYSTALLOGRAPHY (1.79 ANGSTROMS) OF WILD-TYPE AND MUTANTS LEU-47 AND SER-173 IN COMPLEX WITH ACETOACETYL-COENZYME A AND NADP</scope>
    <scope>FUNCTION</scope>
    <scope>CATALYTIC ACTIVITY</scope>
    <scope>KINETIC PARAMETERS</scope>
    <scope>SUBUNIT</scope>
    <scope>PATHWAY</scope>
    <scope>MUTAGENESIS OF GLN-47 AND THR-173</scope>
    <source>
        <strain>ATCC 17699 / DSM 428 / KCTC 22496 / NCIMB 10442 / H16 / Stanier 337</strain>
    </source>
</reference>
<reference key="6">
    <citation type="journal article" date="2014" name="Biochem. Biophys. Res. Commun.">
        <title>Crystal structure of (R)-3-hydroxybutyryl-CoA dehydrogenase PhaB from Ralstonia eutropha.</title>
        <authorList>
            <person name="Kim J."/>
            <person name="Chang J.H."/>
            <person name="Kim E.J."/>
            <person name="Kim K.J."/>
        </authorList>
    </citation>
    <scope>X-RAY CRYSTALLOGRAPHY (1.34 ANGSTROMS) OF APOENZYME AND IN COMPLEXES WITH ACETOACETYL-COENZYME A AND NADP</scope>
    <scope>SUBUNIT</scope>
    <scope>FUNCTION</scope>
    <scope>CATALYTIC ACTIVITY</scope>
    <scope>MUTAGENESIS OF GLN-47; ASP-94; LYS-99; GLN-147; PHE-148; GLN-150; THR-173; TYR-185 AND ARG-195</scope>
    <source>
        <strain>ATCC 17699 / DSM 428 / KCTC 22496 / NCIMB 10442 / H16 / Stanier 337</strain>
    </source>
</reference>
<gene>
    <name evidence="6" type="primary">phaB</name>
    <name evidence="7" type="synonym">phbB</name>
    <name type="ordered locus">H16_A1439</name>
</gene>
<sequence>MTQRIAYVTGGMGGIGTAICQRLAKDGFRVVAGCGPNSPRREKWLEQQKALGFDFIASEGNVADWDSTKTAFDKVKSEVGEVDVLINNAGITRDVVFRKMTRADWDAVIDTNLTSLFNVTKQVIDGMADRGWGRIVNISSVNGQKGQFGQTNYSTAKAGLHGFTMALAQEVATKGVTVNTVSPGYIATDMVKAIRQDVLDKIVATIPVKRLGLPEEIASICAWLSSEESGFSTGADFSLNGGLHMG</sequence>
<comment type="function">
    <text evidence="2 3 4 5">Catalyzes the chiral reduction of acetoacetyl-CoA to (R)-3-hydroxybutyryl-CoA. Is involved in the biosynthesis of polyhydroxybutyrate (PHB), which is accumulated as an intracellular energy reserve material when cells grow under conditions of nutrient limitation.</text>
</comment>
<comment type="catalytic activity">
    <reaction>
        <text>a (3R)-3-hydroxyacyl-CoA + NADP(+) = a 3-oxoacyl-CoA + NADPH + H(+)</text>
        <dbReference type="Rhea" id="RHEA:22256"/>
        <dbReference type="ChEBI" id="CHEBI:15378"/>
        <dbReference type="ChEBI" id="CHEBI:57319"/>
        <dbReference type="ChEBI" id="CHEBI:57783"/>
        <dbReference type="ChEBI" id="CHEBI:58349"/>
        <dbReference type="ChEBI" id="CHEBI:90726"/>
        <dbReference type="EC" id="1.1.1.36"/>
    </reaction>
</comment>
<comment type="catalytic activity">
    <reaction>
        <text>(3R)-3-hydroxybutanoyl-CoA + NADP(+) = acetoacetyl-CoA + NADPH + H(+)</text>
        <dbReference type="Rhea" id="RHEA:45796"/>
        <dbReference type="ChEBI" id="CHEBI:15378"/>
        <dbReference type="ChEBI" id="CHEBI:57286"/>
        <dbReference type="ChEBI" id="CHEBI:57315"/>
        <dbReference type="ChEBI" id="CHEBI:57783"/>
        <dbReference type="ChEBI" id="CHEBI:58349"/>
        <dbReference type="EC" id="1.1.1.36"/>
    </reaction>
</comment>
<comment type="biophysicochemical properties">
    <kinetics>
        <KM evidence="2">5.7 uM for acetoacetyl-CoA</KM>
        <KM evidence="2">149 uM for NADPH</KM>
        <text>kcat is 102 sec(-1).</text>
    </kinetics>
</comment>
<comment type="pathway">
    <text evidence="2 5">Biopolymer metabolism; poly-(R)-3-hydroxybutanoate biosynthesis.</text>
</comment>
<comment type="subunit">
    <text evidence="2 3">Homotetramer.</text>
</comment>
<comment type="subcellular location">
    <subcellularLocation>
        <location>Cytoplasm</location>
    </subcellularLocation>
</comment>
<comment type="similarity">
    <text evidence="8">Belongs to the short-chain dehydrogenases/reductases (SDR) family.</text>
</comment>
<name>PHAB_CUPNH</name>
<proteinExistence type="evidence at protein level"/>
<evidence type="ECO:0000255" key="1">
    <source>
        <dbReference type="PROSITE-ProRule" id="PRU10001"/>
    </source>
</evidence>
<evidence type="ECO:0000269" key="2">
    <source>
    </source>
</evidence>
<evidence type="ECO:0000269" key="3">
    <source>
    </source>
</evidence>
<evidence type="ECO:0000269" key="4">
    <source>
    </source>
</evidence>
<evidence type="ECO:0000269" key="5">
    <source>
    </source>
</evidence>
<evidence type="ECO:0000303" key="6">
    <source>
    </source>
</evidence>
<evidence type="ECO:0000303" key="7">
    <source>
    </source>
</evidence>
<evidence type="ECO:0000305" key="8"/>
<evidence type="ECO:0007829" key="9">
    <source>
        <dbReference type="PDB" id="3VZP"/>
    </source>
</evidence>
<evidence type="ECO:0007829" key="10">
    <source>
        <dbReference type="PDB" id="4N5M"/>
    </source>
</evidence>